<dbReference type="EC" id="2.8.1.9" evidence="3"/>
<dbReference type="EMBL" id="CH379064">
    <property type="protein sequence ID" value="EAL32089.2"/>
    <property type="molecule type" value="Genomic_DNA"/>
</dbReference>
<dbReference type="SMR" id="Q29GM0"/>
<dbReference type="FunCoup" id="Q29GM0">
    <property type="interactions" value="162"/>
</dbReference>
<dbReference type="STRING" id="46245.Q29GM0"/>
<dbReference type="eggNOG" id="KOG2142">
    <property type="taxonomic scope" value="Eukaryota"/>
</dbReference>
<dbReference type="HOGENOM" id="CLU_010913_0_1_1"/>
<dbReference type="InParanoid" id="Q29GM0"/>
<dbReference type="OMA" id="PCTRCQM"/>
<dbReference type="UniPathway" id="UPA00344"/>
<dbReference type="Proteomes" id="UP000001819">
    <property type="component" value="Unplaced"/>
</dbReference>
<dbReference type="GO" id="GO:0016829">
    <property type="term" value="F:lyase activity"/>
    <property type="evidence" value="ECO:0007669"/>
    <property type="project" value="UniProtKB-UniRule"/>
</dbReference>
<dbReference type="GO" id="GO:0008265">
    <property type="term" value="F:molybdenum cofactor sulfurtransferase activity"/>
    <property type="evidence" value="ECO:0000250"/>
    <property type="project" value="UniProtKB"/>
</dbReference>
<dbReference type="GO" id="GO:0030151">
    <property type="term" value="F:molybdenum ion binding"/>
    <property type="evidence" value="ECO:0007669"/>
    <property type="project" value="UniProtKB-UniRule"/>
</dbReference>
<dbReference type="GO" id="GO:0030170">
    <property type="term" value="F:pyridoxal phosphate binding"/>
    <property type="evidence" value="ECO:0007669"/>
    <property type="project" value="UniProtKB-UniRule"/>
</dbReference>
<dbReference type="GO" id="GO:0006777">
    <property type="term" value="P:Mo-molybdopterin cofactor biosynthetic process"/>
    <property type="evidence" value="ECO:0007669"/>
    <property type="project" value="UniProtKB-UniRule"/>
</dbReference>
<dbReference type="GO" id="GO:0043545">
    <property type="term" value="P:molybdopterin cofactor metabolic process"/>
    <property type="evidence" value="ECO:0000250"/>
    <property type="project" value="UniProtKB"/>
</dbReference>
<dbReference type="FunFam" id="3.40.640.10:FF:000119">
    <property type="entry name" value="Molybdenum cofactor sulfurase"/>
    <property type="match status" value="1"/>
</dbReference>
<dbReference type="FunFam" id="3.90.1150.10:FF:000079">
    <property type="entry name" value="Molybdenum cofactor sulfurase"/>
    <property type="match status" value="1"/>
</dbReference>
<dbReference type="Gene3D" id="3.90.1150.10">
    <property type="entry name" value="Aspartate Aminotransferase, domain 1"/>
    <property type="match status" value="1"/>
</dbReference>
<dbReference type="Gene3D" id="3.40.640.10">
    <property type="entry name" value="Type I PLP-dependent aspartate aminotransferase-like (Major domain)"/>
    <property type="match status" value="1"/>
</dbReference>
<dbReference type="HAMAP" id="MF_03050">
    <property type="entry name" value="MOCOS"/>
    <property type="match status" value="1"/>
</dbReference>
<dbReference type="InterPro" id="IPR000192">
    <property type="entry name" value="Aminotrans_V_dom"/>
</dbReference>
<dbReference type="InterPro" id="IPR005302">
    <property type="entry name" value="MoCF_Sase_C"/>
</dbReference>
<dbReference type="InterPro" id="IPR028886">
    <property type="entry name" value="MoCo_sulfurase"/>
</dbReference>
<dbReference type="InterPro" id="IPR005303">
    <property type="entry name" value="MOCOS_middle"/>
</dbReference>
<dbReference type="InterPro" id="IPR015424">
    <property type="entry name" value="PyrdxlP-dep_Trfase"/>
</dbReference>
<dbReference type="InterPro" id="IPR015421">
    <property type="entry name" value="PyrdxlP-dep_Trfase_major"/>
</dbReference>
<dbReference type="InterPro" id="IPR015422">
    <property type="entry name" value="PyrdxlP-dep_Trfase_small"/>
</dbReference>
<dbReference type="InterPro" id="IPR011037">
    <property type="entry name" value="Pyrv_Knase-like_insert_dom_sf"/>
</dbReference>
<dbReference type="PANTHER" id="PTHR14237:SF19">
    <property type="entry name" value="MITOCHONDRIAL AMIDOXIME REDUCING COMPONENT 1"/>
    <property type="match status" value="1"/>
</dbReference>
<dbReference type="PANTHER" id="PTHR14237">
    <property type="entry name" value="MOLYBDOPTERIN COFACTOR SULFURASE MOSC"/>
    <property type="match status" value="1"/>
</dbReference>
<dbReference type="Pfam" id="PF00266">
    <property type="entry name" value="Aminotran_5"/>
    <property type="match status" value="2"/>
</dbReference>
<dbReference type="Pfam" id="PF03473">
    <property type="entry name" value="MOSC"/>
    <property type="match status" value="1"/>
</dbReference>
<dbReference type="Pfam" id="PF03476">
    <property type="entry name" value="MOSC_N"/>
    <property type="match status" value="1"/>
</dbReference>
<dbReference type="SUPFAM" id="SSF141673">
    <property type="entry name" value="MOSC N-terminal domain-like"/>
    <property type="match status" value="1"/>
</dbReference>
<dbReference type="SUPFAM" id="SSF50800">
    <property type="entry name" value="PK beta-barrel domain-like"/>
    <property type="match status" value="1"/>
</dbReference>
<dbReference type="SUPFAM" id="SSF53383">
    <property type="entry name" value="PLP-dependent transferases"/>
    <property type="match status" value="1"/>
</dbReference>
<dbReference type="PROSITE" id="PS51340">
    <property type="entry name" value="MOSC"/>
    <property type="match status" value="1"/>
</dbReference>
<keyword id="KW-0501">Molybdenum cofactor biosynthesis</keyword>
<keyword id="KW-0597">Phosphoprotein</keyword>
<keyword id="KW-0663">Pyridoxal phosphate</keyword>
<keyword id="KW-1185">Reference proteome</keyword>
<keyword id="KW-0808">Transferase</keyword>
<reference key="1">
    <citation type="journal article" date="2005" name="Genome Res.">
        <title>Comparative genome sequencing of Drosophila pseudoobscura: chromosomal, gene, and cis-element evolution.</title>
        <authorList>
            <person name="Richards S."/>
            <person name="Liu Y."/>
            <person name="Bettencourt B.R."/>
            <person name="Hradecky P."/>
            <person name="Letovsky S."/>
            <person name="Nielsen R."/>
            <person name="Thornton K."/>
            <person name="Hubisz M.J."/>
            <person name="Chen R."/>
            <person name="Meisel R.P."/>
            <person name="Couronne O."/>
            <person name="Hua S."/>
            <person name="Smith M.A."/>
            <person name="Zhang P."/>
            <person name="Liu J."/>
            <person name="Bussemaker H.J."/>
            <person name="van Batenburg M.F."/>
            <person name="Howells S.L."/>
            <person name="Scherer S.E."/>
            <person name="Sodergren E."/>
            <person name="Matthews B.B."/>
            <person name="Crosby M.A."/>
            <person name="Schroeder A.J."/>
            <person name="Ortiz-Barrientos D."/>
            <person name="Rives C.M."/>
            <person name="Metzker M.L."/>
            <person name="Muzny D.M."/>
            <person name="Scott G."/>
            <person name="Steffen D."/>
            <person name="Wheeler D.A."/>
            <person name="Worley K.C."/>
            <person name="Havlak P."/>
            <person name="Durbin K.J."/>
            <person name="Egan A."/>
            <person name="Gill R."/>
            <person name="Hume J."/>
            <person name="Morgan M.B."/>
            <person name="Miner G."/>
            <person name="Hamilton C."/>
            <person name="Huang Y."/>
            <person name="Waldron L."/>
            <person name="Verduzco D."/>
            <person name="Clerc-Blankenburg K.P."/>
            <person name="Dubchak I."/>
            <person name="Noor M.A.F."/>
            <person name="Anderson W."/>
            <person name="White K.P."/>
            <person name="Clark A.G."/>
            <person name="Schaeffer S.W."/>
            <person name="Gelbart W.M."/>
            <person name="Weinstock G.M."/>
            <person name="Gibbs R.A."/>
        </authorList>
    </citation>
    <scope>NUCLEOTIDE SEQUENCE [LARGE SCALE GENOMIC DNA]</scope>
    <source>
        <strain>MV2-25 / Tucson 14011-0121.94</strain>
    </source>
</reference>
<protein>
    <recommendedName>
        <fullName evidence="3">Molybdenum cofactor sulfurase</fullName>
        <shortName evidence="3">MCS</shortName>
        <shortName evidence="3">MOS</shortName>
        <shortName evidence="3">MoCo sulfurase</shortName>
        <ecNumber evidence="3">2.8.1.9</ecNumber>
    </recommendedName>
    <alternativeName>
        <fullName evidence="3">Molybdenum cofactor sulfurtransferase</fullName>
    </alternativeName>
    <alternativeName>
        <fullName evidence="3">Protein maroon-like</fullName>
        <shortName evidence="3">Ma-l</shortName>
    </alternativeName>
</protein>
<gene>
    <name evidence="3" type="primary">mal</name>
    <name type="ORF">GA14218</name>
</gene>
<sequence length="792" mass="88401">MSSYQSEFNADEQAAIDKEFTRLANNKSIYLDHAGTTLYAESQVTAAAEQLQRDVICNPHTCRVTGDYVDQVRFKVLEFFNTKEDDYHVIFTANATAALSLVAENFDFGRQGNFHYCQENHTSVLGMRERVQARAMYMLKEEEITGMASLPSAANGVDGSSPGDNSLVTFSAQCNFSGYKIPLAAIAGIQKQGLAHGLGKRVSGEAPQTTDNNNYYVCLDAASFVATNPLDLQRYRPDYVCISFYKIFGYPTGVGALLVSRRGAEAFRKKRNFFGGGTINYAYPHAMDHQLREVFHQRYEDGTLPFLSIVGLLEGFRTLGRLVPRRSDVATMERISRHVHGLAQYLEKQLRQLKYPNGQPLIELYNRVGYEERHRQGGIVAFNVRTDAGPFVGFGEIACVAALQGILLRTGCFCNIGACQRYLGLDETMMDAIYKRAGRICGDYYDLIDGQPTGAVRVSFGYMTRRQDVDELLKMLQLSYLATKPQQRLQLIEEQAGELPKALKERAQRLRPQLLQLAIYPVKSCAAFKIKEGGGGGGAGAGRTWPLTAQGLQYDREWMIVDMNGMAVTQKRCSELCLIRPLIRDDQLVLHFGDSPAGVSLPLSLADQAENSSRCRSKVCRQPVEGLDCGDEVALWLSQHLGLEGLRLLRQSSQRSASNGVRQQQKLSLVNQAQFLLVNRSSVRSLQFEESLDETVDRFRANIIIDTGSAFEELSYKQLTIGQVQFQVEGPCQRCDMICINQRTGERSPETLTTISRLQSGKMRFGIYISRISTENNKEQQHLTCGDVVVVT</sequence>
<evidence type="ECO:0000250" key="1"/>
<evidence type="ECO:0000250" key="2">
    <source>
        <dbReference type="UniProtKB" id="Q96EN8"/>
    </source>
</evidence>
<evidence type="ECO:0000255" key="3">
    <source>
        <dbReference type="HAMAP-Rule" id="MF_03050"/>
    </source>
</evidence>
<proteinExistence type="inferred from homology"/>
<feature type="chain" id="PRO_0000249957" description="Molybdenum cofactor sulfurase">
    <location>
        <begin position="1"/>
        <end position="792"/>
    </location>
</feature>
<feature type="domain" description="MOSC" evidence="3">
    <location>
        <begin position="646"/>
        <end position="792"/>
    </location>
</feature>
<feature type="active site" evidence="3">
    <location>
        <position position="414"/>
    </location>
</feature>
<feature type="modified residue" description="N6-(pyridoxal phosphate)lysine" evidence="3">
    <location>
        <position position="246"/>
    </location>
</feature>
<feature type="modified residue" description="Phosphoserine" evidence="1">
    <location>
        <position position="748"/>
    </location>
</feature>
<organism>
    <name type="scientific">Drosophila pseudoobscura pseudoobscura</name>
    <name type="common">Fruit fly</name>
    <dbReference type="NCBI Taxonomy" id="46245"/>
    <lineage>
        <taxon>Eukaryota</taxon>
        <taxon>Metazoa</taxon>
        <taxon>Ecdysozoa</taxon>
        <taxon>Arthropoda</taxon>
        <taxon>Hexapoda</taxon>
        <taxon>Insecta</taxon>
        <taxon>Pterygota</taxon>
        <taxon>Neoptera</taxon>
        <taxon>Endopterygota</taxon>
        <taxon>Diptera</taxon>
        <taxon>Brachycera</taxon>
        <taxon>Muscomorpha</taxon>
        <taxon>Ephydroidea</taxon>
        <taxon>Drosophilidae</taxon>
        <taxon>Drosophila</taxon>
        <taxon>Sophophora</taxon>
    </lineage>
</organism>
<comment type="function">
    <text evidence="3">Sulfurates the molybdenum cofactor. Sulfation of molybdenum is essential for xanthine dehydrogenase (XDH) and aldehyde oxidase (ADO) enzymes in which molybdenum cofactor is liganded by 1 oxygen and 1 sulfur atom in active form.</text>
</comment>
<comment type="catalytic activity">
    <reaction evidence="3">
        <text>Mo-molybdopterin + L-cysteine + AH2 = thio-Mo-molybdopterin + L-alanine + A + H2O</text>
        <dbReference type="Rhea" id="RHEA:42636"/>
        <dbReference type="ChEBI" id="CHEBI:13193"/>
        <dbReference type="ChEBI" id="CHEBI:15377"/>
        <dbReference type="ChEBI" id="CHEBI:17499"/>
        <dbReference type="ChEBI" id="CHEBI:35235"/>
        <dbReference type="ChEBI" id="CHEBI:57972"/>
        <dbReference type="ChEBI" id="CHEBI:71302"/>
        <dbReference type="ChEBI" id="CHEBI:82685"/>
        <dbReference type="EC" id="2.8.1.9"/>
    </reaction>
</comment>
<comment type="cofactor">
    <cofactor evidence="3">
        <name>pyridoxal 5'-phosphate</name>
        <dbReference type="ChEBI" id="CHEBI:597326"/>
    </cofactor>
</comment>
<comment type="pathway">
    <text evidence="2">Cofactor biosynthesis; molybdopterin biosynthesis.</text>
</comment>
<comment type="similarity">
    <text evidence="3">Belongs to the class-V pyridoxal-phosphate-dependent aminotransferase family. MOCOS subfamily.</text>
</comment>
<accession>Q29GM0</accession>
<name>MOCOS_DROPS</name>